<evidence type="ECO:0000255" key="1">
    <source>
        <dbReference type="HAMAP-Rule" id="MF_00083"/>
    </source>
</evidence>
<reference key="1">
    <citation type="submission" date="2007-06" db="EMBL/GenBank/DDBJ databases">
        <title>Complete sequence of chromosome of Staphylococcus aureus subsp. aureus JH1.</title>
        <authorList>
            <consortium name="US DOE Joint Genome Institute"/>
            <person name="Copeland A."/>
            <person name="Lucas S."/>
            <person name="Lapidus A."/>
            <person name="Barry K."/>
            <person name="Detter J.C."/>
            <person name="Glavina del Rio T."/>
            <person name="Hammon N."/>
            <person name="Israni S."/>
            <person name="Dalin E."/>
            <person name="Tice H."/>
            <person name="Pitluck S."/>
            <person name="Chain P."/>
            <person name="Malfatti S."/>
            <person name="Shin M."/>
            <person name="Vergez L."/>
            <person name="Schmutz J."/>
            <person name="Larimer F."/>
            <person name="Land M."/>
            <person name="Hauser L."/>
            <person name="Kyrpides N."/>
            <person name="Ivanova N."/>
            <person name="Tomasz A."/>
            <person name="Richardson P."/>
        </authorList>
    </citation>
    <scope>NUCLEOTIDE SEQUENCE [LARGE SCALE GENOMIC DNA]</scope>
    <source>
        <strain>JH1</strain>
    </source>
</reference>
<gene>
    <name evidence="1" type="primary">pth</name>
    <name type="ordered locus">SaurJH1_0537</name>
</gene>
<accession>A6TYX7</accession>
<dbReference type="EC" id="3.1.1.29" evidence="1"/>
<dbReference type="EMBL" id="CP000736">
    <property type="protein sequence ID" value="ABR51395.1"/>
    <property type="molecule type" value="Genomic_DNA"/>
</dbReference>
<dbReference type="SMR" id="A6TYX7"/>
<dbReference type="KEGG" id="sah:SaurJH1_0537"/>
<dbReference type="HOGENOM" id="CLU_062456_4_1_9"/>
<dbReference type="GO" id="GO:0005737">
    <property type="term" value="C:cytoplasm"/>
    <property type="evidence" value="ECO:0007669"/>
    <property type="project" value="UniProtKB-SubCell"/>
</dbReference>
<dbReference type="GO" id="GO:0004045">
    <property type="term" value="F:peptidyl-tRNA hydrolase activity"/>
    <property type="evidence" value="ECO:0007669"/>
    <property type="project" value="UniProtKB-UniRule"/>
</dbReference>
<dbReference type="GO" id="GO:0000049">
    <property type="term" value="F:tRNA binding"/>
    <property type="evidence" value="ECO:0007669"/>
    <property type="project" value="UniProtKB-UniRule"/>
</dbReference>
<dbReference type="GO" id="GO:0006515">
    <property type="term" value="P:protein quality control for misfolded or incompletely synthesized proteins"/>
    <property type="evidence" value="ECO:0007669"/>
    <property type="project" value="UniProtKB-UniRule"/>
</dbReference>
<dbReference type="GO" id="GO:0072344">
    <property type="term" value="P:rescue of stalled ribosome"/>
    <property type="evidence" value="ECO:0007669"/>
    <property type="project" value="UniProtKB-UniRule"/>
</dbReference>
<dbReference type="CDD" id="cd00462">
    <property type="entry name" value="PTH"/>
    <property type="match status" value="1"/>
</dbReference>
<dbReference type="FunFam" id="3.40.50.1470:FF:000001">
    <property type="entry name" value="Peptidyl-tRNA hydrolase"/>
    <property type="match status" value="1"/>
</dbReference>
<dbReference type="Gene3D" id="3.40.50.1470">
    <property type="entry name" value="Peptidyl-tRNA hydrolase"/>
    <property type="match status" value="1"/>
</dbReference>
<dbReference type="HAMAP" id="MF_00083">
    <property type="entry name" value="Pept_tRNA_hydro_bact"/>
    <property type="match status" value="1"/>
</dbReference>
<dbReference type="InterPro" id="IPR001328">
    <property type="entry name" value="Pept_tRNA_hydro"/>
</dbReference>
<dbReference type="InterPro" id="IPR018171">
    <property type="entry name" value="Pept_tRNA_hydro_CS"/>
</dbReference>
<dbReference type="InterPro" id="IPR036416">
    <property type="entry name" value="Pept_tRNA_hydro_sf"/>
</dbReference>
<dbReference type="NCBIfam" id="TIGR00447">
    <property type="entry name" value="pth"/>
    <property type="match status" value="1"/>
</dbReference>
<dbReference type="PANTHER" id="PTHR17224">
    <property type="entry name" value="PEPTIDYL-TRNA HYDROLASE"/>
    <property type="match status" value="1"/>
</dbReference>
<dbReference type="PANTHER" id="PTHR17224:SF1">
    <property type="entry name" value="PEPTIDYL-TRNA HYDROLASE"/>
    <property type="match status" value="1"/>
</dbReference>
<dbReference type="Pfam" id="PF01195">
    <property type="entry name" value="Pept_tRNA_hydro"/>
    <property type="match status" value="1"/>
</dbReference>
<dbReference type="SUPFAM" id="SSF53178">
    <property type="entry name" value="Peptidyl-tRNA hydrolase-like"/>
    <property type="match status" value="1"/>
</dbReference>
<dbReference type="PROSITE" id="PS01195">
    <property type="entry name" value="PEPT_TRNA_HYDROL_1"/>
    <property type="match status" value="1"/>
</dbReference>
<dbReference type="PROSITE" id="PS01196">
    <property type="entry name" value="PEPT_TRNA_HYDROL_2"/>
    <property type="match status" value="1"/>
</dbReference>
<feature type="chain" id="PRO_1000075359" description="Peptidyl-tRNA hydrolase">
    <location>
        <begin position="1"/>
        <end position="190"/>
    </location>
</feature>
<feature type="active site" description="Proton acceptor" evidence="1">
    <location>
        <position position="19"/>
    </location>
</feature>
<feature type="binding site" evidence="1">
    <location>
        <position position="14"/>
    </location>
    <ligand>
        <name>tRNA</name>
        <dbReference type="ChEBI" id="CHEBI:17843"/>
    </ligand>
</feature>
<feature type="binding site" evidence="1">
    <location>
        <position position="64"/>
    </location>
    <ligand>
        <name>tRNA</name>
        <dbReference type="ChEBI" id="CHEBI:17843"/>
    </ligand>
</feature>
<feature type="binding site" evidence="1">
    <location>
        <position position="66"/>
    </location>
    <ligand>
        <name>tRNA</name>
        <dbReference type="ChEBI" id="CHEBI:17843"/>
    </ligand>
</feature>
<feature type="binding site" evidence="1">
    <location>
        <position position="112"/>
    </location>
    <ligand>
        <name>tRNA</name>
        <dbReference type="ChEBI" id="CHEBI:17843"/>
    </ligand>
</feature>
<feature type="site" description="Discriminates between blocked and unblocked aminoacyl-tRNA" evidence="1">
    <location>
        <position position="9"/>
    </location>
</feature>
<feature type="site" description="Stabilizes the basic form of H active site to accept a proton" evidence="1">
    <location>
        <position position="91"/>
    </location>
</feature>
<comment type="function">
    <text evidence="1">Hydrolyzes ribosome-free peptidyl-tRNAs (with 1 or more amino acids incorporated), which drop off the ribosome during protein synthesis, or as a result of ribosome stalling.</text>
</comment>
<comment type="function">
    <text evidence="1">Catalyzes the release of premature peptidyl moieties from peptidyl-tRNA molecules trapped in stalled 50S ribosomal subunits, and thus maintains levels of free tRNAs and 50S ribosomes.</text>
</comment>
<comment type="catalytic activity">
    <reaction evidence="1">
        <text>an N-acyl-L-alpha-aminoacyl-tRNA + H2O = an N-acyl-L-amino acid + a tRNA + H(+)</text>
        <dbReference type="Rhea" id="RHEA:54448"/>
        <dbReference type="Rhea" id="RHEA-COMP:10123"/>
        <dbReference type="Rhea" id="RHEA-COMP:13883"/>
        <dbReference type="ChEBI" id="CHEBI:15377"/>
        <dbReference type="ChEBI" id="CHEBI:15378"/>
        <dbReference type="ChEBI" id="CHEBI:59874"/>
        <dbReference type="ChEBI" id="CHEBI:78442"/>
        <dbReference type="ChEBI" id="CHEBI:138191"/>
        <dbReference type="EC" id="3.1.1.29"/>
    </reaction>
</comment>
<comment type="subunit">
    <text evidence="1">Monomer.</text>
</comment>
<comment type="subcellular location">
    <subcellularLocation>
        <location evidence="1">Cytoplasm</location>
    </subcellularLocation>
</comment>
<comment type="similarity">
    <text evidence="1">Belongs to the PTH family.</text>
</comment>
<proteinExistence type="inferred from homology"/>
<keyword id="KW-0963">Cytoplasm</keyword>
<keyword id="KW-0378">Hydrolase</keyword>
<keyword id="KW-0694">RNA-binding</keyword>
<keyword id="KW-0820">tRNA-binding</keyword>
<protein>
    <recommendedName>
        <fullName evidence="1">Peptidyl-tRNA hydrolase</fullName>
        <shortName evidence="1">Pth</shortName>
        <ecNumber evidence="1">3.1.1.29</ecNumber>
    </recommendedName>
</protein>
<name>PTH_STAA2</name>
<sequence length="190" mass="21703">MKCIVGLGNIGKRFELTRHNIGFEVVDYILEKNNFSLDKQKFKGAYTIERMNGDKVLFIEPMTMMNLSGEAVAPIMDYYNVNPEDLIVLYDDLDLEQGQVRLRQKGSAGGHNGMKSIIKMLGTDQFKRIRIGVGRPTNGMTVPDYVLQRFSNDEMVTMEKVIEHAARAIEKFVETSRFDHVMNEFNGEVK</sequence>
<organism>
    <name type="scientific">Staphylococcus aureus (strain JH1)</name>
    <dbReference type="NCBI Taxonomy" id="359787"/>
    <lineage>
        <taxon>Bacteria</taxon>
        <taxon>Bacillati</taxon>
        <taxon>Bacillota</taxon>
        <taxon>Bacilli</taxon>
        <taxon>Bacillales</taxon>
        <taxon>Staphylococcaceae</taxon>
        <taxon>Staphylococcus</taxon>
    </lineage>
</organism>